<feature type="chain" id="PRO_0000249039" description="UPF0382 membrane protein SERP0230">
    <location>
        <begin position="1"/>
        <end position="122"/>
    </location>
</feature>
<feature type="transmembrane region" description="Helical" evidence="1">
    <location>
        <begin position="3"/>
        <end position="23"/>
    </location>
</feature>
<feature type="transmembrane region" description="Helical" evidence="1">
    <location>
        <begin position="46"/>
        <end position="66"/>
    </location>
</feature>
<feature type="transmembrane region" description="Helical" evidence="1">
    <location>
        <begin position="69"/>
        <end position="89"/>
    </location>
</feature>
<feature type="transmembrane region" description="Helical" evidence="1">
    <location>
        <begin position="98"/>
        <end position="118"/>
    </location>
</feature>
<keyword id="KW-1003">Cell membrane</keyword>
<keyword id="KW-0472">Membrane</keyword>
<keyword id="KW-1185">Reference proteome</keyword>
<keyword id="KW-0812">Transmembrane</keyword>
<keyword id="KW-1133">Transmembrane helix</keyword>
<dbReference type="EMBL" id="CP000029">
    <property type="protein sequence ID" value="AAW53617.1"/>
    <property type="status" value="ALT_INIT"/>
    <property type="molecule type" value="Genomic_DNA"/>
</dbReference>
<dbReference type="RefSeq" id="WP_002458376.1">
    <property type="nucleotide sequence ID" value="NC_002976.3"/>
</dbReference>
<dbReference type="STRING" id="176279.SERP0230"/>
<dbReference type="KEGG" id="ser:SERP0230"/>
<dbReference type="eggNOG" id="COG2363">
    <property type="taxonomic scope" value="Bacteria"/>
</dbReference>
<dbReference type="HOGENOM" id="CLU_096548_3_3_9"/>
<dbReference type="Proteomes" id="UP000000531">
    <property type="component" value="Chromosome"/>
</dbReference>
<dbReference type="GO" id="GO:0005886">
    <property type="term" value="C:plasma membrane"/>
    <property type="evidence" value="ECO:0007669"/>
    <property type="project" value="UniProtKB-SubCell"/>
</dbReference>
<dbReference type="InterPro" id="IPR006696">
    <property type="entry name" value="DUF423"/>
</dbReference>
<dbReference type="PANTHER" id="PTHR43461">
    <property type="entry name" value="TRANSMEMBRANE PROTEIN 256"/>
    <property type="match status" value="1"/>
</dbReference>
<dbReference type="PANTHER" id="PTHR43461:SF1">
    <property type="entry name" value="TRANSMEMBRANE PROTEIN 256"/>
    <property type="match status" value="1"/>
</dbReference>
<dbReference type="Pfam" id="PF04241">
    <property type="entry name" value="DUF423"/>
    <property type="match status" value="1"/>
</dbReference>
<name>Y230_STAEQ</name>
<reference key="1">
    <citation type="journal article" date="2005" name="J. Bacteriol.">
        <title>Insights on evolution of virulence and resistance from the complete genome analysis of an early methicillin-resistant Staphylococcus aureus strain and a biofilm-producing methicillin-resistant Staphylococcus epidermidis strain.</title>
        <authorList>
            <person name="Gill S.R."/>
            <person name="Fouts D.E."/>
            <person name="Archer G.L."/>
            <person name="Mongodin E.F."/>
            <person name="DeBoy R.T."/>
            <person name="Ravel J."/>
            <person name="Paulsen I.T."/>
            <person name="Kolonay J.F."/>
            <person name="Brinkac L.M."/>
            <person name="Beanan M.J."/>
            <person name="Dodson R.J."/>
            <person name="Daugherty S.C."/>
            <person name="Madupu R."/>
            <person name="Angiuoli S.V."/>
            <person name="Durkin A.S."/>
            <person name="Haft D.H."/>
            <person name="Vamathevan J.J."/>
            <person name="Khouri H."/>
            <person name="Utterback T.R."/>
            <person name="Lee C."/>
            <person name="Dimitrov G."/>
            <person name="Jiang L."/>
            <person name="Qin H."/>
            <person name="Weidman J."/>
            <person name="Tran K."/>
            <person name="Kang K.H."/>
            <person name="Hance I.R."/>
            <person name="Nelson K.E."/>
            <person name="Fraser C.M."/>
        </authorList>
    </citation>
    <scope>NUCLEOTIDE SEQUENCE [LARGE SCALE GENOMIC DNA]</scope>
    <source>
        <strain>ATCC 35984 / DSM 28319 / BCRC 17069 / CCUG 31568 / BM 3577 / RP62A</strain>
    </source>
</reference>
<accession>Q5HRG3</accession>
<gene>
    <name type="ordered locus">SERP0230</name>
</gene>
<protein>
    <recommendedName>
        <fullName>UPF0382 membrane protein SERP0230</fullName>
    </recommendedName>
</protein>
<comment type="subcellular location">
    <subcellularLocation>
        <location evidence="2">Cell membrane</location>
        <topology evidence="2">Multi-pass membrane protein</topology>
    </subcellularLocation>
</comment>
<comment type="similarity">
    <text evidence="2">Belongs to the UPF0382 family.</text>
</comment>
<comment type="sequence caution" evidence="2">
    <conflict type="erroneous initiation">
        <sequence resource="EMBL-CDS" id="AAW53617"/>
    </conflict>
</comment>
<organism>
    <name type="scientific">Staphylococcus epidermidis (strain ATCC 35984 / DSM 28319 / BCRC 17069 / CCUG 31568 / BM 3577 / RP62A)</name>
    <dbReference type="NCBI Taxonomy" id="176279"/>
    <lineage>
        <taxon>Bacteria</taxon>
        <taxon>Bacillati</taxon>
        <taxon>Bacillota</taxon>
        <taxon>Bacilli</taxon>
        <taxon>Bacillales</taxon>
        <taxon>Staphylococcaceae</taxon>
        <taxon>Staphylococcus</taxon>
    </lineage>
</organism>
<proteinExistence type="inferred from homology"/>
<evidence type="ECO:0000255" key="1"/>
<evidence type="ECO:0000305" key="2"/>
<sequence length="122" mass="13077">MKVFIILGALNAMMAVGTGAFGAHGLEGKLSDKYMSIWEKATTYQMYHGLGLLVIGLISGTTSINVNWAGWLLFFGIVFFSGSLYFLALTQVRILGAITPIGGVLFIIGWLVLVIATLKFAG</sequence>